<sequence length="151" mass="17489">MSSNNQESLANRSHTVTVSETSQILQLRANQTEQVPKLAKKEQKSKVRWDENVVDNEHMNKKKTKICCIFHPQQNFDDEDGGECEHASSSASSSSSSESENDTSMDFEARRQARIARRRQKLERKRSSSPNAYEYQPDYSQYRQKYLHGDK</sequence>
<protein>
    <recommendedName>
        <fullName>Type 1 phosphatases regulator YPI1</fullName>
    </recommendedName>
</protein>
<evidence type="ECO:0000250" key="1"/>
<evidence type="ECO:0000256" key="2">
    <source>
        <dbReference type="SAM" id="MobiDB-lite"/>
    </source>
</evidence>
<evidence type="ECO:0000305" key="3"/>
<gene>
    <name type="primary">YPI1</name>
    <name type="ordered locus">AGR005C</name>
</gene>
<comment type="function">
    <text evidence="1">Regulator of type 1 phosphatases which maintains protein phosphatase activity under strict control.</text>
</comment>
<comment type="subcellular location">
    <subcellularLocation>
        <location evidence="1">Nucleus</location>
    </subcellularLocation>
</comment>
<comment type="similarity">
    <text evidence="3">Belongs to the YPI1 family.</text>
</comment>
<organism>
    <name type="scientific">Eremothecium gossypii (strain ATCC 10895 / CBS 109.51 / FGSC 9923 / NRRL Y-1056)</name>
    <name type="common">Yeast</name>
    <name type="synonym">Ashbya gossypii</name>
    <dbReference type="NCBI Taxonomy" id="284811"/>
    <lineage>
        <taxon>Eukaryota</taxon>
        <taxon>Fungi</taxon>
        <taxon>Dikarya</taxon>
        <taxon>Ascomycota</taxon>
        <taxon>Saccharomycotina</taxon>
        <taxon>Saccharomycetes</taxon>
        <taxon>Saccharomycetales</taxon>
        <taxon>Saccharomycetaceae</taxon>
        <taxon>Eremothecium</taxon>
    </lineage>
</organism>
<reference key="1">
    <citation type="journal article" date="2004" name="Science">
        <title>The Ashbya gossypii genome as a tool for mapping the ancient Saccharomyces cerevisiae genome.</title>
        <authorList>
            <person name="Dietrich F.S."/>
            <person name="Voegeli S."/>
            <person name="Brachat S."/>
            <person name="Lerch A."/>
            <person name="Gates K."/>
            <person name="Steiner S."/>
            <person name="Mohr C."/>
            <person name="Poehlmann R."/>
            <person name="Luedi P."/>
            <person name="Choi S."/>
            <person name="Wing R.A."/>
            <person name="Flavier A."/>
            <person name="Gaffney T.D."/>
            <person name="Philippsen P."/>
        </authorList>
    </citation>
    <scope>NUCLEOTIDE SEQUENCE [LARGE SCALE GENOMIC DNA]</scope>
    <source>
        <strain>ATCC 10895 / CBS 109.51 / FGSC 9923 / NRRL Y-1056</strain>
    </source>
</reference>
<reference key="2">
    <citation type="journal article" date="2013" name="G3 (Bethesda)">
        <title>Genomes of Ashbya fungi isolated from insects reveal four mating-type loci, numerous translocations, lack of transposons, and distinct gene duplications.</title>
        <authorList>
            <person name="Dietrich F.S."/>
            <person name="Voegeli S."/>
            <person name="Kuo S."/>
            <person name="Philippsen P."/>
        </authorList>
    </citation>
    <scope>GENOME REANNOTATION</scope>
    <source>
        <strain>ATCC 10895 / CBS 109.51 / FGSC 9923 / NRRL Y-1056</strain>
    </source>
</reference>
<keyword id="KW-0539">Nucleus</keyword>
<keyword id="KW-1185">Reference proteome</keyword>
<feature type="chain" id="PRO_0000333465" description="Type 1 phosphatases regulator YPI1">
    <location>
        <begin position="1"/>
        <end position="151"/>
    </location>
</feature>
<feature type="region of interest" description="Disordered" evidence="2">
    <location>
        <begin position="1"/>
        <end position="56"/>
    </location>
</feature>
<feature type="region of interest" description="Disordered" evidence="2">
    <location>
        <begin position="78"/>
        <end position="151"/>
    </location>
</feature>
<feature type="compositionally biased region" description="Polar residues" evidence="2">
    <location>
        <begin position="1"/>
        <end position="34"/>
    </location>
</feature>
<feature type="compositionally biased region" description="Basic and acidic residues" evidence="2">
    <location>
        <begin position="39"/>
        <end position="56"/>
    </location>
</feature>
<feature type="compositionally biased region" description="Low complexity" evidence="2">
    <location>
        <begin position="87"/>
        <end position="98"/>
    </location>
</feature>
<feature type="compositionally biased region" description="Basic residues" evidence="2">
    <location>
        <begin position="112"/>
        <end position="124"/>
    </location>
</feature>
<accession>Q750F0</accession>
<dbReference type="EMBL" id="AE016820">
    <property type="protein sequence ID" value="AAS54494.1"/>
    <property type="molecule type" value="Genomic_DNA"/>
</dbReference>
<dbReference type="RefSeq" id="NP_986670.1">
    <property type="nucleotide sequence ID" value="NM_211732.1"/>
</dbReference>
<dbReference type="SMR" id="Q750F0"/>
<dbReference type="FunCoup" id="Q750F0">
    <property type="interactions" value="174"/>
</dbReference>
<dbReference type="STRING" id="284811.Q750F0"/>
<dbReference type="EnsemblFungi" id="AAS54494">
    <property type="protein sequence ID" value="AAS54494"/>
    <property type="gene ID" value="AGOS_AGR005C"/>
</dbReference>
<dbReference type="GeneID" id="4622969"/>
<dbReference type="KEGG" id="ago:AGOS_AGR005C"/>
<dbReference type="eggNOG" id="KOG4102">
    <property type="taxonomic scope" value="Eukaryota"/>
</dbReference>
<dbReference type="HOGENOM" id="CLU_098333_3_0_1"/>
<dbReference type="InParanoid" id="Q750F0"/>
<dbReference type="OMA" id="AYEVQPH"/>
<dbReference type="OrthoDB" id="307488at2759"/>
<dbReference type="Proteomes" id="UP000000591">
    <property type="component" value="Chromosome VII"/>
</dbReference>
<dbReference type="GO" id="GO:0005634">
    <property type="term" value="C:nucleus"/>
    <property type="evidence" value="ECO:0000318"/>
    <property type="project" value="GO_Central"/>
</dbReference>
<dbReference type="GO" id="GO:0000164">
    <property type="term" value="C:protein phosphatase type 1 complex"/>
    <property type="evidence" value="ECO:0007669"/>
    <property type="project" value="EnsemblFungi"/>
</dbReference>
<dbReference type="GO" id="GO:0008157">
    <property type="term" value="F:protein phosphatase 1 binding"/>
    <property type="evidence" value="ECO:0000318"/>
    <property type="project" value="GO_Central"/>
</dbReference>
<dbReference type="GO" id="GO:0072542">
    <property type="term" value="F:protein phosphatase activator activity"/>
    <property type="evidence" value="ECO:0007669"/>
    <property type="project" value="EnsemblFungi"/>
</dbReference>
<dbReference type="GO" id="GO:0004865">
    <property type="term" value="F:protein serine/threonine phosphatase inhibitor activity"/>
    <property type="evidence" value="ECO:0000318"/>
    <property type="project" value="GO_Central"/>
</dbReference>
<dbReference type="GO" id="GO:0005977">
    <property type="term" value="P:glycogen metabolic process"/>
    <property type="evidence" value="ECO:0007669"/>
    <property type="project" value="EnsemblFungi"/>
</dbReference>
<dbReference type="GO" id="GO:0006873">
    <property type="term" value="P:intracellular monoatomic ion homeostasis"/>
    <property type="evidence" value="ECO:0007669"/>
    <property type="project" value="EnsemblFungi"/>
</dbReference>
<dbReference type="GO" id="GO:0007094">
    <property type="term" value="P:mitotic spindle assembly checkpoint signaling"/>
    <property type="evidence" value="ECO:0007669"/>
    <property type="project" value="EnsemblFungi"/>
</dbReference>
<dbReference type="GO" id="GO:1900180">
    <property type="term" value="P:regulation of protein localization to nucleus"/>
    <property type="evidence" value="ECO:0007669"/>
    <property type="project" value="EnsemblFungi"/>
</dbReference>
<dbReference type="InterPro" id="IPR011107">
    <property type="entry name" value="PPI_Ypi1"/>
</dbReference>
<dbReference type="PANTHER" id="PTHR20835:SF0">
    <property type="entry name" value="E3 UBIQUITIN-PROTEIN LIGASE PPP1R11"/>
    <property type="match status" value="1"/>
</dbReference>
<dbReference type="PANTHER" id="PTHR20835">
    <property type="entry name" value="E3 UBIQUITIN-PROTEIN LIGASE PPP1R11-RELATED"/>
    <property type="match status" value="1"/>
</dbReference>
<dbReference type="Pfam" id="PF07491">
    <property type="entry name" value="PPI_Ypi1"/>
    <property type="match status" value="1"/>
</dbReference>
<name>YPI1_EREGS</name>
<proteinExistence type="inferred from homology"/>